<accession>B5YY58</accession>
<protein>
    <recommendedName>
        <fullName evidence="1">Tyrosine recombinase XerC</fullName>
    </recommendedName>
</protein>
<keyword id="KW-0131">Cell cycle</keyword>
<keyword id="KW-0132">Cell division</keyword>
<keyword id="KW-0159">Chromosome partition</keyword>
<keyword id="KW-0963">Cytoplasm</keyword>
<keyword id="KW-0229">DNA integration</keyword>
<keyword id="KW-0233">DNA recombination</keyword>
<keyword id="KW-0238">DNA-binding</keyword>
<reference key="1">
    <citation type="journal article" date="2011" name="Proc. Natl. Acad. Sci. U.S.A.">
        <title>Genomic anatomy of Escherichia coli O157:H7 outbreaks.</title>
        <authorList>
            <person name="Eppinger M."/>
            <person name="Mammel M.K."/>
            <person name="Leclerc J.E."/>
            <person name="Ravel J."/>
            <person name="Cebula T.A."/>
        </authorList>
    </citation>
    <scope>NUCLEOTIDE SEQUENCE [LARGE SCALE GENOMIC DNA]</scope>
    <source>
        <strain>EC4115 / EHEC</strain>
    </source>
</reference>
<name>XERC_ECO5E</name>
<gene>
    <name evidence="1" type="primary">xerC</name>
    <name type="ordered locus">ECH74115_5250</name>
</gene>
<comment type="function">
    <text evidence="1">Site-specific tyrosine recombinase, which acts by catalyzing the cutting and rejoining of the recombining DNA molecules. Binds cooperatively to specific DNA consensus sequences that are separated from XerD binding sites by a short central region, forming the heterotetrameric XerC-XerD complex that recombines DNA substrates. The complex is essential to convert dimers of the bacterial chromosome into monomers to permit their segregation at cell division. It also contributes to the segregational stability of plasmids. In the complex XerC specifically exchanges the top DNA strands.</text>
</comment>
<comment type="activity regulation">
    <text evidence="1">FtsK may regulate the catalytic switch between XerC and XerD in the heterotetrameric complex during the two steps of the recombination process.</text>
</comment>
<comment type="subunit">
    <text evidence="1">Forms a cyclic heterotetrameric complex composed of two molecules of XerC and two molecules of XerD, in which XerC interacts with XerD via its C-terminal region, XerD interacts with XerC via its C-terminal region and so on.</text>
</comment>
<comment type="subcellular location">
    <subcellularLocation>
        <location evidence="1">Cytoplasm</location>
    </subcellularLocation>
</comment>
<comment type="similarity">
    <text evidence="1">Belongs to the 'phage' integrase family. XerC subfamily.</text>
</comment>
<evidence type="ECO:0000255" key="1">
    <source>
        <dbReference type="HAMAP-Rule" id="MF_01808"/>
    </source>
</evidence>
<evidence type="ECO:0000255" key="2">
    <source>
        <dbReference type="PROSITE-ProRule" id="PRU01246"/>
    </source>
</evidence>
<evidence type="ECO:0000255" key="3">
    <source>
        <dbReference type="PROSITE-ProRule" id="PRU01248"/>
    </source>
</evidence>
<proteinExistence type="inferred from homology"/>
<organism>
    <name type="scientific">Escherichia coli O157:H7 (strain EC4115 / EHEC)</name>
    <dbReference type="NCBI Taxonomy" id="444450"/>
    <lineage>
        <taxon>Bacteria</taxon>
        <taxon>Pseudomonadati</taxon>
        <taxon>Pseudomonadota</taxon>
        <taxon>Gammaproteobacteria</taxon>
        <taxon>Enterobacterales</taxon>
        <taxon>Enterobacteriaceae</taxon>
        <taxon>Escherichia</taxon>
    </lineage>
</organism>
<sequence length="298" mass="33879">MTDLHTDVERYLRYLSVERQLSPITLLNYQRQLEAIINFASENGLQNWQQCDAAMVRNFAVRSRRKGLGAASLALRLSALRSFFDWLVSQNELKANPAKGVSAPKTPRHLPKNIDVDDINRLLDIDINDPLAVRDRAMLEVMYGAGLRLSELVGLDIKHLDLESGEVWVMGKGSKERRLPIGRNALSWIEHWLDLRDLFGSEDDALFLSKLGKRISARNVQKRFAEWGIKQGLNNHVHPHKLRHSFATHMLESSGDLRGVQELLGHANLSTTQIYTHLDFQHLASVYDAAHPRAKRGK</sequence>
<dbReference type="EMBL" id="CP001164">
    <property type="protein sequence ID" value="ACI36454.1"/>
    <property type="molecule type" value="Genomic_DNA"/>
</dbReference>
<dbReference type="RefSeq" id="WP_000130682.1">
    <property type="nucleotide sequence ID" value="NC_011353.1"/>
</dbReference>
<dbReference type="SMR" id="B5YY58"/>
<dbReference type="KEGG" id="ecf:ECH74115_5250"/>
<dbReference type="HOGENOM" id="CLU_027562_9_0_6"/>
<dbReference type="GO" id="GO:0005737">
    <property type="term" value="C:cytoplasm"/>
    <property type="evidence" value="ECO:0007669"/>
    <property type="project" value="UniProtKB-SubCell"/>
</dbReference>
<dbReference type="GO" id="GO:0003677">
    <property type="term" value="F:DNA binding"/>
    <property type="evidence" value="ECO:0007669"/>
    <property type="project" value="UniProtKB-KW"/>
</dbReference>
<dbReference type="GO" id="GO:0009037">
    <property type="term" value="F:tyrosine-based site-specific recombinase activity"/>
    <property type="evidence" value="ECO:0007669"/>
    <property type="project" value="UniProtKB-UniRule"/>
</dbReference>
<dbReference type="GO" id="GO:0051301">
    <property type="term" value="P:cell division"/>
    <property type="evidence" value="ECO:0007669"/>
    <property type="project" value="UniProtKB-KW"/>
</dbReference>
<dbReference type="GO" id="GO:0007059">
    <property type="term" value="P:chromosome segregation"/>
    <property type="evidence" value="ECO:0007669"/>
    <property type="project" value="UniProtKB-UniRule"/>
</dbReference>
<dbReference type="GO" id="GO:0006313">
    <property type="term" value="P:DNA transposition"/>
    <property type="evidence" value="ECO:0007669"/>
    <property type="project" value="UniProtKB-UniRule"/>
</dbReference>
<dbReference type="CDD" id="cd00798">
    <property type="entry name" value="INT_XerDC_C"/>
    <property type="match status" value="1"/>
</dbReference>
<dbReference type="FunFam" id="1.10.443.10:FF:000002">
    <property type="entry name" value="Tyrosine recombinase XerC"/>
    <property type="match status" value="1"/>
</dbReference>
<dbReference type="Gene3D" id="1.10.150.130">
    <property type="match status" value="1"/>
</dbReference>
<dbReference type="Gene3D" id="1.10.443.10">
    <property type="entry name" value="Intergrase catalytic core"/>
    <property type="match status" value="1"/>
</dbReference>
<dbReference type="HAMAP" id="MF_01808">
    <property type="entry name" value="Recomb_XerC_XerD"/>
    <property type="match status" value="1"/>
</dbReference>
<dbReference type="InterPro" id="IPR044068">
    <property type="entry name" value="CB"/>
</dbReference>
<dbReference type="InterPro" id="IPR011010">
    <property type="entry name" value="DNA_brk_join_enz"/>
</dbReference>
<dbReference type="InterPro" id="IPR013762">
    <property type="entry name" value="Integrase-like_cat_sf"/>
</dbReference>
<dbReference type="InterPro" id="IPR002104">
    <property type="entry name" value="Integrase_catalytic"/>
</dbReference>
<dbReference type="InterPro" id="IPR010998">
    <property type="entry name" value="Integrase_recombinase_N"/>
</dbReference>
<dbReference type="InterPro" id="IPR004107">
    <property type="entry name" value="Integrase_SAM-like_N"/>
</dbReference>
<dbReference type="InterPro" id="IPR011931">
    <property type="entry name" value="Recomb_XerC"/>
</dbReference>
<dbReference type="InterPro" id="IPR023009">
    <property type="entry name" value="Tyrosine_recombinase_XerC/XerD"/>
</dbReference>
<dbReference type="InterPro" id="IPR050090">
    <property type="entry name" value="Tyrosine_recombinase_XerCD"/>
</dbReference>
<dbReference type="NCBIfam" id="NF001399">
    <property type="entry name" value="PRK00283.1"/>
    <property type="match status" value="1"/>
</dbReference>
<dbReference type="NCBIfam" id="TIGR02224">
    <property type="entry name" value="recomb_XerC"/>
    <property type="match status" value="1"/>
</dbReference>
<dbReference type="PANTHER" id="PTHR30349">
    <property type="entry name" value="PHAGE INTEGRASE-RELATED"/>
    <property type="match status" value="1"/>
</dbReference>
<dbReference type="PANTHER" id="PTHR30349:SF81">
    <property type="entry name" value="TYROSINE RECOMBINASE XERC"/>
    <property type="match status" value="1"/>
</dbReference>
<dbReference type="Pfam" id="PF02899">
    <property type="entry name" value="Phage_int_SAM_1"/>
    <property type="match status" value="1"/>
</dbReference>
<dbReference type="Pfam" id="PF00589">
    <property type="entry name" value="Phage_integrase"/>
    <property type="match status" value="1"/>
</dbReference>
<dbReference type="SUPFAM" id="SSF56349">
    <property type="entry name" value="DNA breaking-rejoining enzymes"/>
    <property type="match status" value="1"/>
</dbReference>
<dbReference type="SUPFAM" id="SSF47823">
    <property type="entry name" value="lambda integrase-like, N-terminal domain"/>
    <property type="match status" value="1"/>
</dbReference>
<dbReference type="PROSITE" id="PS51900">
    <property type="entry name" value="CB"/>
    <property type="match status" value="1"/>
</dbReference>
<dbReference type="PROSITE" id="PS51898">
    <property type="entry name" value="TYR_RECOMBINASE"/>
    <property type="match status" value="1"/>
</dbReference>
<feature type="chain" id="PRO_1000187590" description="Tyrosine recombinase XerC">
    <location>
        <begin position="1"/>
        <end position="298"/>
    </location>
</feature>
<feature type="domain" description="Core-binding (CB)" evidence="3">
    <location>
        <begin position="2"/>
        <end position="88"/>
    </location>
</feature>
<feature type="domain" description="Tyr recombinase" evidence="2">
    <location>
        <begin position="109"/>
        <end position="288"/>
    </location>
</feature>
<feature type="active site" evidence="1">
    <location>
        <position position="148"/>
    </location>
</feature>
<feature type="active site" evidence="1">
    <location>
        <position position="172"/>
    </location>
</feature>
<feature type="active site" evidence="1">
    <location>
        <position position="240"/>
    </location>
</feature>
<feature type="active site" evidence="1">
    <location>
        <position position="243"/>
    </location>
</feature>
<feature type="active site" evidence="1">
    <location>
        <position position="266"/>
    </location>
</feature>
<feature type="active site" description="O-(3'-phospho-DNA)-tyrosine intermediate" evidence="1">
    <location>
        <position position="275"/>
    </location>
</feature>